<organism>
    <name type="scientific">Schizophyllum commune</name>
    <name type="common">Split gill fungus</name>
    <dbReference type="NCBI Taxonomy" id="5334"/>
    <lineage>
        <taxon>Eukaryota</taxon>
        <taxon>Fungi</taxon>
        <taxon>Dikarya</taxon>
        <taxon>Basidiomycota</taxon>
        <taxon>Agaricomycotina</taxon>
        <taxon>Agaricomycetes</taxon>
        <taxon>Agaricomycetidae</taxon>
        <taxon>Agaricales</taxon>
        <taxon>Schizophyllaceae</taxon>
        <taxon>Schizophyllum</taxon>
    </lineage>
</organism>
<keyword id="KW-0249">Electron transport</keyword>
<keyword id="KW-0349">Heme</keyword>
<keyword id="KW-0408">Iron</keyword>
<keyword id="KW-0472">Membrane</keyword>
<keyword id="KW-0479">Metal-binding</keyword>
<keyword id="KW-0496">Mitochondrion</keyword>
<keyword id="KW-0999">Mitochondrion inner membrane</keyword>
<keyword id="KW-0679">Respiratory chain</keyword>
<keyword id="KW-0812">Transmembrane</keyword>
<keyword id="KW-1133">Transmembrane helix</keyword>
<keyword id="KW-0813">Transport</keyword>
<keyword id="KW-0830">Ubiquinone</keyword>
<reference key="1">
    <citation type="journal article" date="2002" name="Mol. Biol. Evol.">
        <title>Hyaloraphidium curvatum: a linear mitochondrial genome, tRNA editing, and an evolutionary link to lower fungi.</title>
        <authorList>
            <person name="Forget L."/>
            <person name="Ustinova J."/>
            <person name="Wang Z."/>
            <person name="Huss V.A.R."/>
            <person name="Lang B.F."/>
        </authorList>
    </citation>
    <scope>NUCLEOTIDE SEQUENCE [LARGE SCALE GENOMIC DNA]</scope>
</reference>
<feature type="chain" id="PRO_0000061759" description="Cytochrome b">
    <location>
        <begin position="1"/>
        <end position="383"/>
    </location>
</feature>
<feature type="transmembrane region" description="Helical" evidence="3">
    <location>
        <begin position="32"/>
        <end position="52"/>
    </location>
</feature>
<feature type="transmembrane region" description="Helical" evidence="3">
    <location>
        <begin position="76"/>
        <end position="98"/>
    </location>
</feature>
<feature type="transmembrane region" description="Helical" evidence="3">
    <location>
        <begin position="113"/>
        <end position="133"/>
    </location>
</feature>
<feature type="transmembrane region" description="Helical" evidence="3">
    <location>
        <begin position="179"/>
        <end position="199"/>
    </location>
</feature>
<feature type="transmembrane region" description="Helical" evidence="3">
    <location>
        <begin position="225"/>
        <end position="245"/>
    </location>
</feature>
<feature type="transmembrane region" description="Helical" evidence="3">
    <location>
        <begin position="289"/>
        <end position="309"/>
    </location>
</feature>
<feature type="transmembrane region" description="Helical" evidence="3">
    <location>
        <begin position="321"/>
        <end position="341"/>
    </location>
</feature>
<feature type="transmembrane region" description="Helical" evidence="3">
    <location>
        <begin position="348"/>
        <end position="368"/>
    </location>
</feature>
<feature type="binding site" description="axial binding residue" evidence="5">
    <location>
        <position position="82"/>
    </location>
    <ligand>
        <name>heme b</name>
        <dbReference type="ChEBI" id="CHEBI:60344"/>
        <label>b562</label>
    </ligand>
    <ligandPart>
        <name>Fe</name>
        <dbReference type="ChEBI" id="CHEBI:18248"/>
    </ligandPart>
</feature>
<feature type="binding site" description="axial binding residue" evidence="5">
    <location>
        <position position="96"/>
    </location>
    <ligand>
        <name>heme b</name>
        <dbReference type="ChEBI" id="CHEBI:60344"/>
        <label>b566</label>
    </ligand>
    <ligandPart>
        <name>Fe</name>
        <dbReference type="ChEBI" id="CHEBI:18248"/>
    </ligandPart>
</feature>
<feature type="binding site" description="axial binding residue" evidence="5">
    <location>
        <position position="183"/>
    </location>
    <ligand>
        <name>heme b</name>
        <dbReference type="ChEBI" id="CHEBI:60344"/>
        <label>b562</label>
    </ligand>
    <ligandPart>
        <name>Fe</name>
        <dbReference type="ChEBI" id="CHEBI:18248"/>
    </ligandPart>
</feature>
<feature type="binding site" description="axial binding residue" evidence="5">
    <location>
        <position position="197"/>
    </location>
    <ligand>
        <name>heme b</name>
        <dbReference type="ChEBI" id="CHEBI:60344"/>
        <label>b566</label>
    </ligand>
    <ligandPart>
        <name>Fe</name>
        <dbReference type="ChEBI" id="CHEBI:18248"/>
    </ligandPart>
</feature>
<feature type="binding site" evidence="2">
    <location>
        <position position="202"/>
    </location>
    <ligand>
        <name>a ubiquinone</name>
        <dbReference type="ChEBI" id="CHEBI:16389"/>
    </ligand>
</feature>
<protein>
    <recommendedName>
        <fullName>Cytochrome b</fullName>
    </recommendedName>
    <alternativeName>
        <fullName>Complex III subunit 3</fullName>
    </alternativeName>
    <alternativeName>
        <fullName>Complex III subunit III</fullName>
    </alternativeName>
    <alternativeName>
        <fullName>Cytochrome b-c1 complex subunit 3</fullName>
    </alternativeName>
    <alternativeName>
        <fullName>Ubiquinol-cytochrome-c reductase complex cytochrome b subunit</fullName>
    </alternativeName>
</protein>
<dbReference type="EMBL" id="AF402141">
    <property type="protein sequence ID" value="AAK83405.1"/>
    <property type="molecule type" value="Genomic_DNA"/>
</dbReference>
<dbReference type="RefSeq" id="NP_150121.1">
    <property type="nucleotide sequence ID" value="NC_003049.1"/>
</dbReference>
<dbReference type="SMR" id="Q94ZJ2"/>
<dbReference type="GeneID" id="803606"/>
<dbReference type="GO" id="GO:0005743">
    <property type="term" value="C:mitochondrial inner membrane"/>
    <property type="evidence" value="ECO:0007669"/>
    <property type="project" value="UniProtKB-SubCell"/>
</dbReference>
<dbReference type="GO" id="GO:0045275">
    <property type="term" value="C:respiratory chain complex III"/>
    <property type="evidence" value="ECO:0007669"/>
    <property type="project" value="InterPro"/>
</dbReference>
<dbReference type="GO" id="GO:0046872">
    <property type="term" value="F:metal ion binding"/>
    <property type="evidence" value="ECO:0007669"/>
    <property type="project" value="UniProtKB-KW"/>
</dbReference>
<dbReference type="GO" id="GO:0008121">
    <property type="term" value="F:ubiquinol-cytochrome-c reductase activity"/>
    <property type="evidence" value="ECO:0007669"/>
    <property type="project" value="InterPro"/>
</dbReference>
<dbReference type="GO" id="GO:0006122">
    <property type="term" value="P:mitochondrial electron transport, ubiquinol to cytochrome c"/>
    <property type="evidence" value="ECO:0007669"/>
    <property type="project" value="TreeGrafter"/>
</dbReference>
<dbReference type="CDD" id="cd00290">
    <property type="entry name" value="cytochrome_b_C"/>
    <property type="match status" value="1"/>
</dbReference>
<dbReference type="CDD" id="cd00284">
    <property type="entry name" value="Cytochrome_b_N"/>
    <property type="match status" value="1"/>
</dbReference>
<dbReference type="FunFam" id="1.20.810.10:FF:000002">
    <property type="entry name" value="Cytochrome b"/>
    <property type="match status" value="1"/>
</dbReference>
<dbReference type="Gene3D" id="1.20.810.10">
    <property type="entry name" value="Cytochrome Bc1 Complex, Chain C"/>
    <property type="match status" value="1"/>
</dbReference>
<dbReference type="InterPro" id="IPR005798">
    <property type="entry name" value="Cyt_b/b6_C"/>
</dbReference>
<dbReference type="InterPro" id="IPR036150">
    <property type="entry name" value="Cyt_b/b6_C_sf"/>
</dbReference>
<dbReference type="InterPro" id="IPR005797">
    <property type="entry name" value="Cyt_b/b6_N"/>
</dbReference>
<dbReference type="InterPro" id="IPR027387">
    <property type="entry name" value="Cytb/b6-like_sf"/>
</dbReference>
<dbReference type="InterPro" id="IPR030689">
    <property type="entry name" value="Cytochrome_b"/>
</dbReference>
<dbReference type="InterPro" id="IPR048260">
    <property type="entry name" value="Cytochrome_b_C_euk/bac"/>
</dbReference>
<dbReference type="InterPro" id="IPR048259">
    <property type="entry name" value="Cytochrome_b_N_euk/bac"/>
</dbReference>
<dbReference type="InterPro" id="IPR016174">
    <property type="entry name" value="Di-haem_cyt_TM"/>
</dbReference>
<dbReference type="PANTHER" id="PTHR19271">
    <property type="entry name" value="CYTOCHROME B"/>
    <property type="match status" value="1"/>
</dbReference>
<dbReference type="PANTHER" id="PTHR19271:SF16">
    <property type="entry name" value="CYTOCHROME B"/>
    <property type="match status" value="1"/>
</dbReference>
<dbReference type="Pfam" id="PF00032">
    <property type="entry name" value="Cytochrom_B_C"/>
    <property type="match status" value="1"/>
</dbReference>
<dbReference type="Pfam" id="PF00033">
    <property type="entry name" value="Cytochrome_B"/>
    <property type="match status" value="1"/>
</dbReference>
<dbReference type="PIRSF" id="PIRSF038885">
    <property type="entry name" value="COB"/>
    <property type="match status" value="1"/>
</dbReference>
<dbReference type="SUPFAM" id="SSF81648">
    <property type="entry name" value="a domain/subunit of cytochrome bc1 complex (Ubiquinol-cytochrome c reductase)"/>
    <property type="match status" value="1"/>
</dbReference>
<dbReference type="SUPFAM" id="SSF81342">
    <property type="entry name" value="Transmembrane di-heme cytochromes"/>
    <property type="match status" value="1"/>
</dbReference>
<dbReference type="PROSITE" id="PS51003">
    <property type="entry name" value="CYTB_CTER"/>
    <property type="match status" value="1"/>
</dbReference>
<dbReference type="PROSITE" id="PS51002">
    <property type="entry name" value="CYTB_NTER"/>
    <property type="match status" value="1"/>
</dbReference>
<proteinExistence type="inferred from homology"/>
<geneLocation type="mitochondrion"/>
<accession>Q94ZJ2</accession>
<name>CYB_SCHCO</name>
<evidence type="ECO:0000250" key="1"/>
<evidence type="ECO:0000250" key="2">
    <source>
        <dbReference type="UniProtKB" id="P00157"/>
    </source>
</evidence>
<evidence type="ECO:0000250" key="3">
    <source>
        <dbReference type="UniProtKB" id="P00163"/>
    </source>
</evidence>
<evidence type="ECO:0000255" key="4">
    <source>
        <dbReference type="PROSITE-ProRule" id="PRU00967"/>
    </source>
</evidence>
<evidence type="ECO:0000255" key="5">
    <source>
        <dbReference type="PROSITE-ProRule" id="PRU00968"/>
    </source>
</evidence>
<comment type="function">
    <text evidence="3">Component of the ubiquinol-cytochrome c reductase complex (complex III or cytochrome b-c1 complex) that is part of the mitochondrial respiratory chain. The b-c1 complex mediates electron transfer from ubiquinol to cytochrome c. Contributes to the generation of a proton gradient across the mitochondrial membrane that is then used for ATP synthesis.</text>
</comment>
<comment type="cofactor">
    <cofactor evidence="3">
        <name>heme b</name>
        <dbReference type="ChEBI" id="CHEBI:60344"/>
    </cofactor>
    <text evidence="3">Binds 2 heme b groups non-covalently.</text>
</comment>
<comment type="subunit">
    <text evidence="3">Fungal cytochrome b-c1 complex contains 10 subunits; 3 respiratory subunits, 2 core proteins and 5 low-molecular weight proteins. Cytochrome b-c1 complex is a homodimer.</text>
</comment>
<comment type="subcellular location">
    <subcellularLocation>
        <location evidence="3">Mitochondrion inner membrane</location>
        <topology evidence="3">Multi-pass membrane protein</topology>
    </subcellularLocation>
</comment>
<comment type="miscellaneous">
    <text evidence="1">Heme 1 (or BL or b562) is low-potential and absorbs at about 562 nm, and heme 2 (or BH or b566) is high-potential and absorbs at about 566 nm.</text>
</comment>
<comment type="similarity">
    <text evidence="4 5">Belongs to the cytochrome b family.</text>
</comment>
<comment type="caution">
    <text evidence="3">The protein contains only eight transmembrane helices, not nine as predicted by bioinformatics tools.</text>
</comment>
<sequence>MRLLKSNSLLRLVNSYLVDSPQPGNLSYMWNFGSLLAVCLVIQILTGCFLAMHYTAHVDLAFNSVEHIMRDVNNGWLIRYTHANVASFFFIFVYCHIARGLYYGSFKEPRTLTWSIGVIILILMMAIAFLGYVLPFGQMSLWGATVITNLMSAIPVYGQDIVELIWGGFSVSNATLNRFFSLHYILPFLLAALAVAHMIALHVHGSGNPNGLNAGDDRFPMHPYFIFKDLVTIFAFLLVLSIFVCFYPNALGHSDNYIPANPMVTPASIVPEWYLLPFYAILRSIPNKLLGVIAMFGSLLILLVLPLTDLSRVRGNQFRPLMKLSFWFFVVDFIILMWIGAEHPASPYLEVGQIATAFYFAWFVFIVPAVGLFENTMADINKL</sequence>
<gene>
    <name type="primary">cob</name>
    <name type="synonym">cytB</name>
</gene>